<evidence type="ECO:0000255" key="1">
    <source>
        <dbReference type="HAMAP-Rule" id="MF_01723"/>
    </source>
</evidence>
<dbReference type="EC" id="7.6.2.15" evidence="1"/>
<dbReference type="EMBL" id="BA000031">
    <property type="protein sequence ID" value="BAC58581.1"/>
    <property type="molecule type" value="Genomic_DNA"/>
</dbReference>
<dbReference type="RefSeq" id="NP_796697.1">
    <property type="nucleotide sequence ID" value="NC_004603.1"/>
</dbReference>
<dbReference type="RefSeq" id="WP_005454663.1">
    <property type="nucleotide sequence ID" value="NC_004603.1"/>
</dbReference>
<dbReference type="SMR" id="Q87SV4"/>
<dbReference type="GeneID" id="1187785"/>
<dbReference type="KEGG" id="vpa:VP0318"/>
<dbReference type="PATRIC" id="fig|223926.6.peg.306"/>
<dbReference type="eggNOG" id="COG3840">
    <property type="taxonomic scope" value="Bacteria"/>
</dbReference>
<dbReference type="HOGENOM" id="CLU_000604_1_22_6"/>
<dbReference type="Proteomes" id="UP000002493">
    <property type="component" value="Chromosome 1"/>
</dbReference>
<dbReference type="GO" id="GO:0005886">
    <property type="term" value="C:plasma membrane"/>
    <property type="evidence" value="ECO:0007669"/>
    <property type="project" value="UniProtKB-SubCell"/>
</dbReference>
<dbReference type="GO" id="GO:0048502">
    <property type="term" value="F:ABC-type thiamine transporter activity"/>
    <property type="evidence" value="ECO:0007669"/>
    <property type="project" value="UniProtKB-EC"/>
</dbReference>
<dbReference type="GO" id="GO:0005524">
    <property type="term" value="F:ATP binding"/>
    <property type="evidence" value="ECO:0007669"/>
    <property type="project" value="UniProtKB-KW"/>
</dbReference>
<dbReference type="GO" id="GO:0016887">
    <property type="term" value="F:ATP hydrolysis activity"/>
    <property type="evidence" value="ECO:0007669"/>
    <property type="project" value="InterPro"/>
</dbReference>
<dbReference type="FunFam" id="3.40.50.300:FF:001071">
    <property type="entry name" value="Thiamine import ATP-binding protein ThiQ"/>
    <property type="match status" value="1"/>
</dbReference>
<dbReference type="Gene3D" id="3.40.50.300">
    <property type="entry name" value="P-loop containing nucleotide triphosphate hydrolases"/>
    <property type="match status" value="1"/>
</dbReference>
<dbReference type="InterPro" id="IPR003593">
    <property type="entry name" value="AAA+_ATPase"/>
</dbReference>
<dbReference type="InterPro" id="IPR050093">
    <property type="entry name" value="ABC_SmlMolc_Importer"/>
</dbReference>
<dbReference type="InterPro" id="IPR003439">
    <property type="entry name" value="ABC_transporter-like_ATP-bd"/>
</dbReference>
<dbReference type="InterPro" id="IPR017871">
    <property type="entry name" value="ABC_transporter-like_CS"/>
</dbReference>
<dbReference type="InterPro" id="IPR027417">
    <property type="entry name" value="P-loop_NTPase"/>
</dbReference>
<dbReference type="InterPro" id="IPR005968">
    <property type="entry name" value="Thiamine_ABC_ThiQ"/>
</dbReference>
<dbReference type="NCBIfam" id="NF008039">
    <property type="entry name" value="PRK10771.1"/>
    <property type="match status" value="1"/>
</dbReference>
<dbReference type="NCBIfam" id="TIGR01277">
    <property type="entry name" value="thiQ"/>
    <property type="match status" value="1"/>
</dbReference>
<dbReference type="PANTHER" id="PTHR42781">
    <property type="entry name" value="SPERMIDINE/PUTRESCINE IMPORT ATP-BINDING PROTEIN POTA"/>
    <property type="match status" value="1"/>
</dbReference>
<dbReference type="PANTHER" id="PTHR42781:SF1">
    <property type="entry name" value="THIAMINE IMPORT ATP-BINDING PROTEIN THIQ"/>
    <property type="match status" value="1"/>
</dbReference>
<dbReference type="Pfam" id="PF00005">
    <property type="entry name" value="ABC_tran"/>
    <property type="match status" value="1"/>
</dbReference>
<dbReference type="SMART" id="SM00382">
    <property type="entry name" value="AAA"/>
    <property type="match status" value="1"/>
</dbReference>
<dbReference type="SUPFAM" id="SSF52540">
    <property type="entry name" value="P-loop containing nucleoside triphosphate hydrolases"/>
    <property type="match status" value="1"/>
</dbReference>
<dbReference type="PROSITE" id="PS00211">
    <property type="entry name" value="ABC_TRANSPORTER_1"/>
    <property type="match status" value="1"/>
</dbReference>
<dbReference type="PROSITE" id="PS50893">
    <property type="entry name" value="ABC_TRANSPORTER_2"/>
    <property type="match status" value="1"/>
</dbReference>
<dbReference type="PROSITE" id="PS51288">
    <property type="entry name" value="THIQ"/>
    <property type="match status" value="1"/>
</dbReference>
<feature type="chain" id="PRO_0000274467" description="Thiamine import ATP-binding protein ThiQ">
    <location>
        <begin position="1"/>
        <end position="234"/>
    </location>
</feature>
<feature type="domain" description="ABC transporter" evidence="1">
    <location>
        <begin position="2"/>
        <end position="230"/>
    </location>
</feature>
<feature type="binding site" evidence="1">
    <location>
        <begin position="32"/>
        <end position="39"/>
    </location>
    <ligand>
        <name>ATP</name>
        <dbReference type="ChEBI" id="CHEBI:30616"/>
    </ligand>
</feature>
<proteinExistence type="inferred from homology"/>
<organism>
    <name type="scientific">Vibrio parahaemolyticus serotype O3:K6 (strain RIMD 2210633)</name>
    <dbReference type="NCBI Taxonomy" id="223926"/>
    <lineage>
        <taxon>Bacteria</taxon>
        <taxon>Pseudomonadati</taxon>
        <taxon>Pseudomonadota</taxon>
        <taxon>Gammaproteobacteria</taxon>
        <taxon>Vibrionales</taxon>
        <taxon>Vibrionaceae</taxon>
        <taxon>Vibrio</taxon>
    </lineage>
</organism>
<sequence>MLVLDDVQYTYQRELFRFELSIERGQIVSLMGPSGAGKSTLLALVAGFIHPDQGDIRVDGESIVRKEPYQRPFSMLFQEHNLFSHLSVRDNIGLGLHPGLKLTVDQKRQVEQAAQQVGVAEYLDRLPEHLSGGQRQRVALARCFVQPHPMWLLDEPFSALDPVLREEMLSLVKKLAAERGITVLMVTHHLSDAKAIASHFAFVANGKVEAVGEIDALTAEHPSKTLQAFVRAAG</sequence>
<reference key="1">
    <citation type="journal article" date="2003" name="Lancet">
        <title>Genome sequence of Vibrio parahaemolyticus: a pathogenic mechanism distinct from that of V. cholerae.</title>
        <authorList>
            <person name="Makino K."/>
            <person name="Oshima K."/>
            <person name="Kurokawa K."/>
            <person name="Yokoyama K."/>
            <person name="Uda T."/>
            <person name="Tagomori K."/>
            <person name="Iijima Y."/>
            <person name="Najima M."/>
            <person name="Nakano M."/>
            <person name="Yamashita A."/>
            <person name="Kubota Y."/>
            <person name="Kimura S."/>
            <person name="Yasunaga T."/>
            <person name="Honda T."/>
            <person name="Shinagawa H."/>
            <person name="Hattori M."/>
            <person name="Iida T."/>
        </authorList>
    </citation>
    <scope>NUCLEOTIDE SEQUENCE [LARGE SCALE GENOMIC DNA]</scope>
    <source>
        <strain>RIMD 2210633</strain>
    </source>
</reference>
<protein>
    <recommendedName>
        <fullName evidence="1">Thiamine import ATP-binding protein ThiQ</fullName>
        <ecNumber evidence="1">7.6.2.15</ecNumber>
    </recommendedName>
</protein>
<keyword id="KW-0067">ATP-binding</keyword>
<keyword id="KW-0997">Cell inner membrane</keyword>
<keyword id="KW-1003">Cell membrane</keyword>
<keyword id="KW-0472">Membrane</keyword>
<keyword id="KW-0547">Nucleotide-binding</keyword>
<keyword id="KW-1278">Translocase</keyword>
<keyword id="KW-0813">Transport</keyword>
<comment type="function">
    <text evidence="1">Part of the ABC transporter complex ThiBPQ involved in thiamine import. Responsible for energy coupling to the transport system.</text>
</comment>
<comment type="catalytic activity">
    <reaction evidence="1">
        <text>thiamine(out) + ATP + H2O = thiamine(in) + ADP + phosphate + H(+)</text>
        <dbReference type="Rhea" id="RHEA:29811"/>
        <dbReference type="ChEBI" id="CHEBI:15377"/>
        <dbReference type="ChEBI" id="CHEBI:15378"/>
        <dbReference type="ChEBI" id="CHEBI:18385"/>
        <dbReference type="ChEBI" id="CHEBI:30616"/>
        <dbReference type="ChEBI" id="CHEBI:43474"/>
        <dbReference type="ChEBI" id="CHEBI:456216"/>
        <dbReference type="EC" id="7.6.2.15"/>
    </reaction>
</comment>
<comment type="subunit">
    <text evidence="1">The complex is composed of two ATP-binding proteins (ThiQ), two transmembrane proteins (ThiP) and a solute-binding protein (ThiB).</text>
</comment>
<comment type="subcellular location">
    <subcellularLocation>
        <location evidence="1">Cell inner membrane</location>
        <topology evidence="1">Peripheral membrane protein</topology>
    </subcellularLocation>
</comment>
<comment type="similarity">
    <text evidence="1">Belongs to the ABC transporter superfamily. Thiamine importer (TC 3.A.1.19.1) family.</text>
</comment>
<accession>Q87SV4</accession>
<name>THIQ_VIBPA</name>
<gene>
    <name evidence="1" type="primary">thiQ</name>
    <name type="ordered locus">VP0318</name>
</gene>